<sequence length="120" mass="13100">MSEQAGSSVAVIQERQALLARQHDAVAEADRELADVLASAHAAMRESVRRLDAIAAELDRAVPDQDQLAVDTPMGAREFQTFLVAKQREIVAVVAAAHELDRAKSAVLKRLRAQYTEPAR</sequence>
<organism>
    <name type="scientific">Mycobacterium tuberculosis (strain CDC 1551 / Oshkosh)</name>
    <dbReference type="NCBI Taxonomy" id="83331"/>
    <lineage>
        <taxon>Bacteria</taxon>
        <taxon>Bacillati</taxon>
        <taxon>Actinomycetota</taxon>
        <taxon>Actinomycetes</taxon>
        <taxon>Mycobacteriales</taxon>
        <taxon>Mycobacteriaceae</taxon>
        <taxon>Mycobacterium</taxon>
        <taxon>Mycobacterium tuberculosis complex</taxon>
    </lineage>
</organism>
<dbReference type="EMBL" id="AE000516">
    <property type="protein sequence ID" value="AAK44250.1"/>
    <property type="status" value="ALT_FRAME"/>
    <property type="molecule type" value="Genomic_DNA"/>
</dbReference>
<dbReference type="PIR" id="G70700">
    <property type="entry name" value="G70700"/>
</dbReference>
<dbReference type="KEGG" id="mtc:MT0028"/>
<dbReference type="HOGENOM" id="CLU_2437692_0_0_11"/>
<dbReference type="Proteomes" id="UP000001020">
    <property type="component" value="Chromosome"/>
</dbReference>
<dbReference type="InterPro" id="IPR019710">
    <property type="entry name" value="DUF4226"/>
</dbReference>
<dbReference type="Pfam" id="PF10774">
    <property type="entry name" value="DUF4226"/>
    <property type="match status" value="1"/>
</dbReference>
<protein>
    <recommendedName>
        <fullName>Uncharacterized protein MT0028</fullName>
    </recommendedName>
</protein>
<feature type="chain" id="PRO_0000427340" description="Uncharacterized protein MT0028">
    <location>
        <begin position="1"/>
        <end position="120"/>
    </location>
</feature>
<evidence type="ECO:0000305" key="1"/>
<name>Y025_MYCTO</name>
<keyword id="KW-1185">Reference proteome</keyword>
<accession>P9WMA0</accession>
<accession>L0T5A5</accession>
<accession>P71595</accession>
<reference key="1">
    <citation type="journal article" date="2002" name="J. Bacteriol.">
        <title>Whole-genome comparison of Mycobacterium tuberculosis clinical and laboratory strains.</title>
        <authorList>
            <person name="Fleischmann R.D."/>
            <person name="Alland D."/>
            <person name="Eisen J.A."/>
            <person name="Carpenter L."/>
            <person name="White O."/>
            <person name="Peterson J.D."/>
            <person name="DeBoy R.T."/>
            <person name="Dodson R.J."/>
            <person name="Gwinn M.L."/>
            <person name="Haft D.H."/>
            <person name="Hickey E.K."/>
            <person name="Kolonay J.F."/>
            <person name="Nelson W.C."/>
            <person name="Umayam L.A."/>
            <person name="Ermolaeva M.D."/>
            <person name="Salzberg S.L."/>
            <person name="Delcher A."/>
            <person name="Utterback T.R."/>
            <person name="Weidman J.F."/>
            <person name="Khouri H.M."/>
            <person name="Gill J."/>
            <person name="Mikula A."/>
            <person name="Bishai W."/>
            <person name="Jacobs W.R. Jr."/>
            <person name="Venter J.C."/>
            <person name="Fraser C.M."/>
        </authorList>
    </citation>
    <scope>NUCLEOTIDE SEQUENCE [LARGE SCALE GENOMIC DNA]</scope>
    <source>
        <strain>CDC 1551 / Oshkosh</strain>
    </source>
</reference>
<gene>
    <name type="ordered locus">MT0028</name>
</gene>
<proteinExistence type="predicted"/>
<comment type="similarity">
    <text evidence="1">To M.tuberculosis Rv0026 and Rv0739.</text>
</comment>
<comment type="sequence caution" evidence="1">
    <conflict type="frameshift">
        <sequence resource="EMBL-CDS" id="AAK44250"/>
    </conflict>
</comment>